<reference key="1">
    <citation type="journal article" date="2010" name="J. Bacteriol.">
        <title>Whole genome sequences of two Xylella fastidiosa strains (M12 and M23) causing almond leaf scorch disease in California.</title>
        <authorList>
            <person name="Chen J."/>
            <person name="Xie G."/>
            <person name="Han S."/>
            <person name="Chertkov O."/>
            <person name="Sims D."/>
            <person name="Civerolo E.L."/>
        </authorList>
    </citation>
    <scope>NUCLEOTIDE SEQUENCE [LARGE SCALE GENOMIC DNA]</scope>
    <source>
        <strain>M23</strain>
    </source>
</reference>
<comment type="function">
    <text evidence="1">Catalyzes the methylthiolation of N6-(dimethylallyl)adenosine (i(6)A), leading to the formation of 2-methylthio-N6-(dimethylallyl)adenosine (ms(2)i(6)A) at position 37 in tRNAs that read codons beginning with uridine.</text>
</comment>
<comment type="catalytic activity">
    <reaction evidence="1">
        <text>N(6)-dimethylallyladenosine(37) in tRNA + (sulfur carrier)-SH + AH2 + 2 S-adenosyl-L-methionine = 2-methylsulfanyl-N(6)-dimethylallyladenosine(37) in tRNA + (sulfur carrier)-H + 5'-deoxyadenosine + L-methionine + A + S-adenosyl-L-homocysteine + 2 H(+)</text>
        <dbReference type="Rhea" id="RHEA:37067"/>
        <dbReference type="Rhea" id="RHEA-COMP:10375"/>
        <dbReference type="Rhea" id="RHEA-COMP:10376"/>
        <dbReference type="Rhea" id="RHEA-COMP:14737"/>
        <dbReference type="Rhea" id="RHEA-COMP:14739"/>
        <dbReference type="ChEBI" id="CHEBI:13193"/>
        <dbReference type="ChEBI" id="CHEBI:15378"/>
        <dbReference type="ChEBI" id="CHEBI:17319"/>
        <dbReference type="ChEBI" id="CHEBI:17499"/>
        <dbReference type="ChEBI" id="CHEBI:29917"/>
        <dbReference type="ChEBI" id="CHEBI:57844"/>
        <dbReference type="ChEBI" id="CHEBI:57856"/>
        <dbReference type="ChEBI" id="CHEBI:59789"/>
        <dbReference type="ChEBI" id="CHEBI:64428"/>
        <dbReference type="ChEBI" id="CHEBI:74415"/>
        <dbReference type="ChEBI" id="CHEBI:74417"/>
        <dbReference type="EC" id="2.8.4.3"/>
    </reaction>
</comment>
<comment type="cofactor">
    <cofactor evidence="1">
        <name>[4Fe-4S] cluster</name>
        <dbReference type="ChEBI" id="CHEBI:49883"/>
    </cofactor>
    <text evidence="1">Binds 2 [4Fe-4S] clusters. One cluster is coordinated with 3 cysteines and an exchangeable S-adenosyl-L-methionine.</text>
</comment>
<comment type="subunit">
    <text evidence="1">Monomer.</text>
</comment>
<comment type="subcellular location">
    <subcellularLocation>
        <location evidence="1">Cytoplasm</location>
    </subcellularLocation>
</comment>
<comment type="similarity">
    <text evidence="1">Belongs to the methylthiotransferase family. MiaB subfamily.</text>
</comment>
<accession>B2I8U1</accession>
<sequence length="497" mass="55315">MTGTSNIPTHGKEHKDAPALLPLPAPNTHHTHAAHPGDPSHDRHPSRGKLFIKTHGCQMNEYDSAKMADVLTTTEALELTDNPEEADIILINTCSIREKAQEKVFSQLGRWRALKTNGRDVIIGVGGCVASQEGETIVKRAPYVDLVFGPQTLHRLPDMIRARREQNRPQVDISFPEIEKFDHLPTPRAEGPSAFVSIMEGCSKYCSFCVVPYTRGEEVSRPFEDVLTEIAHLATQGVREINLLGQNVNAYRGAMDPGPSNNTNPAPPPYADLGLLIRAIAQFESIGRIRFTTSHPLEFSDSLVEAYRDVPQLANHLHLPVQSGSDRILSAMKRGYTALEFKSKIRKLRAVRPDISISSDFIIGFPGESDTDFQKTMQLIKDIGFDQSFSFIYSRRPGTPASNLEDHTPDEIKRTRLEHLQKHINAYAADISKRMIGTVQTVLVEGPSKKNPNELTGKTENMRPVNFPGHPRLIGQFIDVHITEALTNSLRGRVHTN</sequence>
<keyword id="KW-0004">4Fe-4S</keyword>
<keyword id="KW-0963">Cytoplasm</keyword>
<keyword id="KW-0408">Iron</keyword>
<keyword id="KW-0411">Iron-sulfur</keyword>
<keyword id="KW-0479">Metal-binding</keyword>
<keyword id="KW-0949">S-adenosyl-L-methionine</keyword>
<keyword id="KW-0808">Transferase</keyword>
<keyword id="KW-0819">tRNA processing</keyword>
<gene>
    <name evidence="1" type="primary">miaB</name>
    <name type="ordered locus">XfasM23_1882</name>
</gene>
<proteinExistence type="inferred from homology"/>
<feature type="chain" id="PRO_0000374652" description="tRNA-2-methylthio-N(6)-dimethylallyladenosine synthase">
    <location>
        <begin position="1"/>
        <end position="497"/>
    </location>
</feature>
<feature type="domain" description="MTTase N-terminal" evidence="1">
    <location>
        <begin position="48"/>
        <end position="165"/>
    </location>
</feature>
<feature type="domain" description="Radical SAM core" evidence="2">
    <location>
        <begin position="188"/>
        <end position="430"/>
    </location>
</feature>
<feature type="domain" description="TRAM" evidence="1">
    <location>
        <begin position="433"/>
        <end position="496"/>
    </location>
</feature>
<feature type="region of interest" description="Disordered" evidence="3">
    <location>
        <begin position="1"/>
        <end position="48"/>
    </location>
</feature>
<feature type="compositionally biased region" description="Low complexity" evidence="3">
    <location>
        <begin position="18"/>
        <end position="28"/>
    </location>
</feature>
<feature type="binding site" evidence="1">
    <location>
        <position position="57"/>
    </location>
    <ligand>
        <name>[4Fe-4S] cluster</name>
        <dbReference type="ChEBI" id="CHEBI:49883"/>
        <label>1</label>
    </ligand>
</feature>
<feature type="binding site" evidence="1">
    <location>
        <position position="94"/>
    </location>
    <ligand>
        <name>[4Fe-4S] cluster</name>
        <dbReference type="ChEBI" id="CHEBI:49883"/>
        <label>1</label>
    </ligand>
</feature>
<feature type="binding site" evidence="1">
    <location>
        <position position="128"/>
    </location>
    <ligand>
        <name>[4Fe-4S] cluster</name>
        <dbReference type="ChEBI" id="CHEBI:49883"/>
        <label>1</label>
    </ligand>
</feature>
<feature type="binding site" evidence="1">
    <location>
        <position position="202"/>
    </location>
    <ligand>
        <name>[4Fe-4S] cluster</name>
        <dbReference type="ChEBI" id="CHEBI:49883"/>
        <label>2</label>
        <note>4Fe-4S-S-AdoMet</note>
    </ligand>
</feature>
<feature type="binding site" evidence="1">
    <location>
        <position position="206"/>
    </location>
    <ligand>
        <name>[4Fe-4S] cluster</name>
        <dbReference type="ChEBI" id="CHEBI:49883"/>
        <label>2</label>
        <note>4Fe-4S-S-AdoMet</note>
    </ligand>
</feature>
<feature type="binding site" evidence="1">
    <location>
        <position position="209"/>
    </location>
    <ligand>
        <name>[4Fe-4S] cluster</name>
        <dbReference type="ChEBI" id="CHEBI:49883"/>
        <label>2</label>
        <note>4Fe-4S-S-AdoMet</note>
    </ligand>
</feature>
<dbReference type="EC" id="2.8.4.3" evidence="1"/>
<dbReference type="EMBL" id="CP001011">
    <property type="protein sequence ID" value="ACB93282.1"/>
    <property type="molecule type" value="Genomic_DNA"/>
</dbReference>
<dbReference type="RefSeq" id="WP_004089609.1">
    <property type="nucleotide sequence ID" value="NC_010577.1"/>
</dbReference>
<dbReference type="SMR" id="B2I8U1"/>
<dbReference type="GeneID" id="93905628"/>
<dbReference type="KEGG" id="xfn:XfasM23_1882"/>
<dbReference type="HOGENOM" id="CLU_018697_2_0_6"/>
<dbReference type="Proteomes" id="UP000001698">
    <property type="component" value="Chromosome"/>
</dbReference>
<dbReference type="GO" id="GO:0005829">
    <property type="term" value="C:cytosol"/>
    <property type="evidence" value="ECO:0007669"/>
    <property type="project" value="TreeGrafter"/>
</dbReference>
<dbReference type="GO" id="GO:0051539">
    <property type="term" value="F:4 iron, 4 sulfur cluster binding"/>
    <property type="evidence" value="ECO:0007669"/>
    <property type="project" value="UniProtKB-UniRule"/>
</dbReference>
<dbReference type="GO" id="GO:0046872">
    <property type="term" value="F:metal ion binding"/>
    <property type="evidence" value="ECO:0007669"/>
    <property type="project" value="UniProtKB-KW"/>
</dbReference>
<dbReference type="GO" id="GO:0035597">
    <property type="term" value="F:N6-isopentenyladenosine methylthiotransferase activity"/>
    <property type="evidence" value="ECO:0007669"/>
    <property type="project" value="TreeGrafter"/>
</dbReference>
<dbReference type="CDD" id="cd01335">
    <property type="entry name" value="Radical_SAM"/>
    <property type="match status" value="1"/>
</dbReference>
<dbReference type="FunFam" id="3.40.50.12160:FF:000001">
    <property type="entry name" value="tRNA-2-methylthio-N(6)-dimethylallyladenosine synthase"/>
    <property type="match status" value="1"/>
</dbReference>
<dbReference type="FunFam" id="3.80.30.20:FF:000001">
    <property type="entry name" value="tRNA-2-methylthio-N(6)-dimethylallyladenosine synthase 2"/>
    <property type="match status" value="1"/>
</dbReference>
<dbReference type="Gene3D" id="3.40.50.12160">
    <property type="entry name" value="Methylthiotransferase, N-terminal domain"/>
    <property type="match status" value="1"/>
</dbReference>
<dbReference type="Gene3D" id="3.80.30.20">
    <property type="entry name" value="tm_1862 like domain"/>
    <property type="match status" value="1"/>
</dbReference>
<dbReference type="HAMAP" id="MF_01864">
    <property type="entry name" value="tRNA_metthiotr_MiaB"/>
    <property type="match status" value="1"/>
</dbReference>
<dbReference type="InterPro" id="IPR006638">
    <property type="entry name" value="Elp3/MiaA/NifB-like_rSAM"/>
</dbReference>
<dbReference type="InterPro" id="IPR005839">
    <property type="entry name" value="Methylthiotransferase"/>
</dbReference>
<dbReference type="InterPro" id="IPR020612">
    <property type="entry name" value="Methylthiotransferase_CS"/>
</dbReference>
<dbReference type="InterPro" id="IPR013848">
    <property type="entry name" value="Methylthiotransferase_N"/>
</dbReference>
<dbReference type="InterPro" id="IPR038135">
    <property type="entry name" value="Methylthiotransferase_N_sf"/>
</dbReference>
<dbReference type="InterPro" id="IPR006463">
    <property type="entry name" value="MiaB_methiolase"/>
</dbReference>
<dbReference type="InterPro" id="IPR007197">
    <property type="entry name" value="rSAM"/>
</dbReference>
<dbReference type="InterPro" id="IPR023404">
    <property type="entry name" value="rSAM_horseshoe"/>
</dbReference>
<dbReference type="InterPro" id="IPR002792">
    <property type="entry name" value="TRAM_dom"/>
</dbReference>
<dbReference type="NCBIfam" id="TIGR01574">
    <property type="entry name" value="miaB-methiolase"/>
    <property type="match status" value="1"/>
</dbReference>
<dbReference type="NCBIfam" id="TIGR00089">
    <property type="entry name" value="MiaB/RimO family radical SAM methylthiotransferase"/>
    <property type="match status" value="1"/>
</dbReference>
<dbReference type="PANTHER" id="PTHR43020">
    <property type="entry name" value="CDK5 REGULATORY SUBUNIT-ASSOCIATED PROTEIN 1"/>
    <property type="match status" value="1"/>
</dbReference>
<dbReference type="PANTHER" id="PTHR43020:SF2">
    <property type="entry name" value="MITOCHONDRIAL TRNA METHYLTHIOTRANSFERASE CDK5RAP1"/>
    <property type="match status" value="1"/>
</dbReference>
<dbReference type="Pfam" id="PF04055">
    <property type="entry name" value="Radical_SAM"/>
    <property type="match status" value="1"/>
</dbReference>
<dbReference type="Pfam" id="PF01938">
    <property type="entry name" value="TRAM"/>
    <property type="match status" value="1"/>
</dbReference>
<dbReference type="Pfam" id="PF00919">
    <property type="entry name" value="UPF0004"/>
    <property type="match status" value="1"/>
</dbReference>
<dbReference type="SFLD" id="SFLDF00273">
    <property type="entry name" value="(dimethylallyl)adenosine_tRNA"/>
    <property type="match status" value="1"/>
</dbReference>
<dbReference type="SFLD" id="SFLDG01082">
    <property type="entry name" value="B12-binding_domain_containing"/>
    <property type="match status" value="1"/>
</dbReference>
<dbReference type="SFLD" id="SFLDG01061">
    <property type="entry name" value="methylthiotransferase"/>
    <property type="match status" value="1"/>
</dbReference>
<dbReference type="SMART" id="SM00729">
    <property type="entry name" value="Elp3"/>
    <property type="match status" value="1"/>
</dbReference>
<dbReference type="SUPFAM" id="SSF102114">
    <property type="entry name" value="Radical SAM enzymes"/>
    <property type="match status" value="1"/>
</dbReference>
<dbReference type="PROSITE" id="PS51449">
    <property type="entry name" value="MTTASE_N"/>
    <property type="match status" value="1"/>
</dbReference>
<dbReference type="PROSITE" id="PS01278">
    <property type="entry name" value="MTTASE_RADICAL"/>
    <property type="match status" value="1"/>
</dbReference>
<dbReference type="PROSITE" id="PS51918">
    <property type="entry name" value="RADICAL_SAM"/>
    <property type="match status" value="1"/>
</dbReference>
<dbReference type="PROSITE" id="PS50926">
    <property type="entry name" value="TRAM"/>
    <property type="match status" value="1"/>
</dbReference>
<evidence type="ECO:0000255" key="1">
    <source>
        <dbReference type="HAMAP-Rule" id="MF_01864"/>
    </source>
</evidence>
<evidence type="ECO:0000255" key="2">
    <source>
        <dbReference type="PROSITE-ProRule" id="PRU01266"/>
    </source>
</evidence>
<evidence type="ECO:0000256" key="3">
    <source>
        <dbReference type="SAM" id="MobiDB-lite"/>
    </source>
</evidence>
<organism>
    <name type="scientific">Xylella fastidiosa (strain M23)</name>
    <dbReference type="NCBI Taxonomy" id="405441"/>
    <lineage>
        <taxon>Bacteria</taxon>
        <taxon>Pseudomonadati</taxon>
        <taxon>Pseudomonadota</taxon>
        <taxon>Gammaproteobacteria</taxon>
        <taxon>Lysobacterales</taxon>
        <taxon>Lysobacteraceae</taxon>
        <taxon>Xylella</taxon>
    </lineage>
</organism>
<name>MIAB_XYLF2</name>
<protein>
    <recommendedName>
        <fullName evidence="1">tRNA-2-methylthio-N(6)-dimethylallyladenosine synthase</fullName>
        <ecNumber evidence="1">2.8.4.3</ecNumber>
    </recommendedName>
    <alternativeName>
        <fullName evidence="1">(Dimethylallyl)adenosine tRNA methylthiotransferase MiaB</fullName>
    </alternativeName>
    <alternativeName>
        <fullName evidence="1">tRNA-i(6)A37 methylthiotransferase</fullName>
    </alternativeName>
</protein>